<accession>B1LN12</accession>
<protein>
    <recommendedName>
        <fullName evidence="1">23S rRNA (uracil(747)-C(5))-methyltransferase RlmC</fullName>
        <ecNumber evidence="1">2.1.1.189</ecNumber>
    </recommendedName>
    <alternativeName>
        <fullName evidence="1">23S rRNA(m5U747)-methyltransferase</fullName>
    </alternativeName>
</protein>
<sequence length="375" mass="41910">MQCALYDAGRCRSCQWITQPIPEQLSAKTADLKNLLADFPVEEWCAPVSGPEQGFRNKAKMVVSGSVEKPLLGMLHRDGTPEDLCDCPLYPASFAPVFAALKPFIARAGLTPYNVARKRGELKYILLTESQSDGGMMLRFVLRSDTKLAQLRKALPWLQEQLPQLKVITVNIQPVHMAIMEGETEIYLTEQQALAERFNDVPLWIRPQSFFQTNPAVASQLYATARDWVRQLPVNHMWDLFCGVGGFGLHCATPDIQLTGIEIAPEAIACAKQSAAELGLTRLQFQALDSTQFATAQGEVPELVLVNPPRRGIGIPLCDYLSTMAPRFIIYSSCNAQTMAKDIRELPGYRIERVQLFDMFPHTAHYEVLTLLVKQ</sequence>
<evidence type="ECO:0000255" key="1">
    <source>
        <dbReference type="HAMAP-Rule" id="MF_01012"/>
    </source>
</evidence>
<keyword id="KW-0004">4Fe-4S</keyword>
<keyword id="KW-0408">Iron</keyword>
<keyword id="KW-0411">Iron-sulfur</keyword>
<keyword id="KW-0479">Metal-binding</keyword>
<keyword id="KW-0489">Methyltransferase</keyword>
<keyword id="KW-0698">rRNA processing</keyword>
<keyword id="KW-0949">S-adenosyl-L-methionine</keyword>
<keyword id="KW-0808">Transferase</keyword>
<gene>
    <name evidence="1" type="primary">rlmC</name>
    <name type="synonym">rumB</name>
    <name type="ordered locus">EcSMS35_0887</name>
</gene>
<dbReference type="EC" id="2.1.1.189" evidence="1"/>
<dbReference type="EMBL" id="CP000970">
    <property type="protein sequence ID" value="ACB17366.1"/>
    <property type="molecule type" value="Genomic_DNA"/>
</dbReference>
<dbReference type="RefSeq" id="WP_001149716.1">
    <property type="nucleotide sequence ID" value="NC_010498.1"/>
</dbReference>
<dbReference type="SMR" id="B1LN12"/>
<dbReference type="KEGG" id="ecm:EcSMS35_0887"/>
<dbReference type="HOGENOM" id="CLU_014689_0_0_6"/>
<dbReference type="Proteomes" id="UP000007011">
    <property type="component" value="Chromosome"/>
</dbReference>
<dbReference type="GO" id="GO:0051539">
    <property type="term" value="F:4 iron, 4 sulfur cluster binding"/>
    <property type="evidence" value="ECO:0007669"/>
    <property type="project" value="UniProtKB-KW"/>
</dbReference>
<dbReference type="GO" id="GO:0005506">
    <property type="term" value="F:iron ion binding"/>
    <property type="evidence" value="ECO:0007669"/>
    <property type="project" value="UniProtKB-UniRule"/>
</dbReference>
<dbReference type="GO" id="GO:0070041">
    <property type="term" value="F:rRNA (uridine-C5-)-methyltransferase activity"/>
    <property type="evidence" value="ECO:0007669"/>
    <property type="project" value="UniProtKB-UniRule"/>
</dbReference>
<dbReference type="GO" id="GO:0070475">
    <property type="term" value="P:rRNA base methylation"/>
    <property type="evidence" value="ECO:0007669"/>
    <property type="project" value="TreeGrafter"/>
</dbReference>
<dbReference type="CDD" id="cd02440">
    <property type="entry name" value="AdoMet_MTases"/>
    <property type="match status" value="1"/>
</dbReference>
<dbReference type="FunFam" id="2.40.50.1070:FF:000002">
    <property type="entry name" value="23S rRNA (uracil(747)-C(5))-methyltransferase RlmC"/>
    <property type="match status" value="1"/>
</dbReference>
<dbReference type="FunFam" id="3.40.50.150:FF:000049">
    <property type="entry name" value="23S rRNA (uracil(747)-C(5))-methyltransferase RlmC"/>
    <property type="match status" value="1"/>
</dbReference>
<dbReference type="Gene3D" id="2.40.50.1070">
    <property type="match status" value="1"/>
</dbReference>
<dbReference type="Gene3D" id="3.40.50.150">
    <property type="entry name" value="Vaccinia Virus protein VP39"/>
    <property type="match status" value="1"/>
</dbReference>
<dbReference type="HAMAP" id="MF_01012">
    <property type="entry name" value="23SrRNA_methyltr_RlmC"/>
    <property type="match status" value="1"/>
</dbReference>
<dbReference type="InterPro" id="IPR011825">
    <property type="entry name" value="23SrRNA_MeTrfase_RlmC"/>
</dbReference>
<dbReference type="InterPro" id="IPR030390">
    <property type="entry name" value="MeTrfase_TrmA_AS"/>
</dbReference>
<dbReference type="InterPro" id="IPR030391">
    <property type="entry name" value="MeTrfase_TrmA_CS"/>
</dbReference>
<dbReference type="InterPro" id="IPR029063">
    <property type="entry name" value="SAM-dependent_MTases_sf"/>
</dbReference>
<dbReference type="InterPro" id="IPR010280">
    <property type="entry name" value="U5_MeTrfase_fam"/>
</dbReference>
<dbReference type="NCBIfam" id="TIGR02085">
    <property type="entry name" value="meth_trns_rumB"/>
    <property type="match status" value="1"/>
</dbReference>
<dbReference type="PANTHER" id="PTHR11061">
    <property type="entry name" value="RNA M5U METHYLTRANSFERASE"/>
    <property type="match status" value="1"/>
</dbReference>
<dbReference type="PANTHER" id="PTHR11061:SF30">
    <property type="entry name" value="TRNA (URACIL(54)-C(5))-METHYLTRANSFERASE"/>
    <property type="match status" value="1"/>
</dbReference>
<dbReference type="Pfam" id="PF05958">
    <property type="entry name" value="tRNA_U5-meth_tr"/>
    <property type="match status" value="1"/>
</dbReference>
<dbReference type="SUPFAM" id="SSF53335">
    <property type="entry name" value="S-adenosyl-L-methionine-dependent methyltransferases"/>
    <property type="match status" value="1"/>
</dbReference>
<dbReference type="PROSITE" id="PS51687">
    <property type="entry name" value="SAM_MT_RNA_M5U"/>
    <property type="match status" value="1"/>
</dbReference>
<dbReference type="PROSITE" id="PS01230">
    <property type="entry name" value="TRMA_1"/>
    <property type="match status" value="1"/>
</dbReference>
<dbReference type="PROSITE" id="PS01231">
    <property type="entry name" value="TRMA_2"/>
    <property type="match status" value="1"/>
</dbReference>
<reference key="1">
    <citation type="journal article" date="2008" name="J. Bacteriol.">
        <title>Insights into the environmental resistance gene pool from the genome sequence of the multidrug-resistant environmental isolate Escherichia coli SMS-3-5.</title>
        <authorList>
            <person name="Fricke W.F."/>
            <person name="Wright M.S."/>
            <person name="Lindell A.H."/>
            <person name="Harkins D.M."/>
            <person name="Baker-Austin C."/>
            <person name="Ravel J."/>
            <person name="Stepanauskas R."/>
        </authorList>
    </citation>
    <scope>NUCLEOTIDE SEQUENCE [LARGE SCALE GENOMIC DNA]</scope>
    <source>
        <strain>SMS-3-5 / SECEC</strain>
    </source>
</reference>
<proteinExistence type="inferred from homology"/>
<name>RLMC_ECOSM</name>
<comment type="function">
    <text evidence="1">Catalyzes the formation of 5-methyl-uridine at position 747 (m5U747) in 23S rRNA.</text>
</comment>
<comment type="catalytic activity">
    <reaction evidence="1">
        <text>uridine(747) in 23S rRNA + S-adenosyl-L-methionine = 5-methyluridine(747) in 23S rRNA + S-adenosyl-L-homocysteine + H(+)</text>
        <dbReference type="Rhea" id="RHEA:42628"/>
        <dbReference type="Rhea" id="RHEA-COMP:10154"/>
        <dbReference type="Rhea" id="RHEA-COMP:10155"/>
        <dbReference type="ChEBI" id="CHEBI:15378"/>
        <dbReference type="ChEBI" id="CHEBI:57856"/>
        <dbReference type="ChEBI" id="CHEBI:59789"/>
        <dbReference type="ChEBI" id="CHEBI:65315"/>
        <dbReference type="ChEBI" id="CHEBI:74447"/>
        <dbReference type="EC" id="2.1.1.189"/>
    </reaction>
</comment>
<comment type="similarity">
    <text evidence="1">Belongs to the class I-like SAM-binding methyltransferase superfamily. RNA M5U methyltransferase family. RlmC subfamily.</text>
</comment>
<feature type="chain" id="PRO_1000200865" description="23S rRNA (uracil(747)-C(5))-methyltransferase RlmC">
    <location>
        <begin position="1"/>
        <end position="375"/>
    </location>
</feature>
<feature type="active site" description="Nucleophile" evidence="1">
    <location>
        <position position="334"/>
    </location>
</feature>
<feature type="binding site" evidence="1">
    <location>
        <position position="3"/>
    </location>
    <ligand>
        <name>[4Fe-4S] cluster</name>
        <dbReference type="ChEBI" id="CHEBI:49883"/>
    </ligand>
</feature>
<feature type="binding site" evidence="1">
    <location>
        <position position="11"/>
    </location>
    <ligand>
        <name>[4Fe-4S] cluster</name>
        <dbReference type="ChEBI" id="CHEBI:49883"/>
    </ligand>
</feature>
<feature type="binding site" evidence="1">
    <location>
        <position position="14"/>
    </location>
    <ligand>
        <name>[4Fe-4S] cluster</name>
        <dbReference type="ChEBI" id="CHEBI:49883"/>
    </ligand>
</feature>
<feature type="binding site" evidence="1">
    <location>
        <position position="87"/>
    </location>
    <ligand>
        <name>[4Fe-4S] cluster</name>
        <dbReference type="ChEBI" id="CHEBI:49883"/>
    </ligand>
</feature>
<feature type="binding site" evidence="1">
    <location>
        <position position="212"/>
    </location>
    <ligand>
        <name>S-adenosyl-L-methionine</name>
        <dbReference type="ChEBI" id="CHEBI:59789"/>
    </ligand>
</feature>
<feature type="binding site" evidence="1">
    <location>
        <position position="241"/>
    </location>
    <ligand>
        <name>S-adenosyl-L-methionine</name>
        <dbReference type="ChEBI" id="CHEBI:59789"/>
    </ligand>
</feature>
<feature type="binding site" evidence="1">
    <location>
        <position position="262"/>
    </location>
    <ligand>
        <name>S-adenosyl-L-methionine</name>
        <dbReference type="ChEBI" id="CHEBI:59789"/>
    </ligand>
</feature>
<feature type="binding site" evidence="1">
    <location>
        <position position="307"/>
    </location>
    <ligand>
        <name>S-adenosyl-L-methionine</name>
        <dbReference type="ChEBI" id="CHEBI:59789"/>
    </ligand>
</feature>
<organism>
    <name type="scientific">Escherichia coli (strain SMS-3-5 / SECEC)</name>
    <dbReference type="NCBI Taxonomy" id="439855"/>
    <lineage>
        <taxon>Bacteria</taxon>
        <taxon>Pseudomonadati</taxon>
        <taxon>Pseudomonadota</taxon>
        <taxon>Gammaproteobacteria</taxon>
        <taxon>Enterobacterales</taxon>
        <taxon>Enterobacteriaceae</taxon>
        <taxon>Escherichia</taxon>
    </lineage>
</organism>